<protein>
    <recommendedName>
        <fullName evidence="1">Energy-coupling factor transporter transmembrane protein EcfT</fullName>
        <shortName evidence="1">ECF transporter T component EcfT</shortName>
    </recommendedName>
</protein>
<reference key="1">
    <citation type="journal article" date="2001" name="Science">
        <title>Comparative genomics of Listeria species.</title>
        <authorList>
            <person name="Glaser P."/>
            <person name="Frangeul L."/>
            <person name="Buchrieser C."/>
            <person name="Rusniok C."/>
            <person name="Amend A."/>
            <person name="Baquero F."/>
            <person name="Berche P."/>
            <person name="Bloecker H."/>
            <person name="Brandt P."/>
            <person name="Chakraborty T."/>
            <person name="Charbit A."/>
            <person name="Chetouani F."/>
            <person name="Couve E."/>
            <person name="de Daruvar A."/>
            <person name="Dehoux P."/>
            <person name="Domann E."/>
            <person name="Dominguez-Bernal G."/>
            <person name="Duchaud E."/>
            <person name="Durant L."/>
            <person name="Dussurget O."/>
            <person name="Entian K.-D."/>
            <person name="Fsihi H."/>
            <person name="Garcia-del Portillo F."/>
            <person name="Garrido P."/>
            <person name="Gautier L."/>
            <person name="Goebel W."/>
            <person name="Gomez-Lopez N."/>
            <person name="Hain T."/>
            <person name="Hauf J."/>
            <person name="Jackson D."/>
            <person name="Jones L.-M."/>
            <person name="Kaerst U."/>
            <person name="Kreft J."/>
            <person name="Kuhn M."/>
            <person name="Kunst F."/>
            <person name="Kurapkat G."/>
            <person name="Madueno E."/>
            <person name="Maitournam A."/>
            <person name="Mata Vicente J."/>
            <person name="Ng E."/>
            <person name="Nedjari H."/>
            <person name="Nordsiek G."/>
            <person name="Novella S."/>
            <person name="de Pablos B."/>
            <person name="Perez-Diaz J.-C."/>
            <person name="Purcell R."/>
            <person name="Remmel B."/>
            <person name="Rose M."/>
            <person name="Schlueter T."/>
            <person name="Simoes N."/>
            <person name="Tierrez A."/>
            <person name="Vazquez-Boland J.-A."/>
            <person name="Voss H."/>
            <person name="Wehland J."/>
            <person name="Cossart P."/>
        </authorList>
    </citation>
    <scope>NUCLEOTIDE SEQUENCE [LARGE SCALE GENOMIC DNA]</scope>
    <source>
        <strain>ATCC BAA-680 / CLIP 11262</strain>
    </source>
</reference>
<evidence type="ECO:0000255" key="1">
    <source>
        <dbReference type="HAMAP-Rule" id="MF_01461"/>
    </source>
</evidence>
<feature type="chain" id="PRO_0000408997" description="Energy-coupling factor transporter transmembrane protein EcfT">
    <location>
        <begin position="1"/>
        <end position="265"/>
    </location>
</feature>
<feature type="transmembrane region" description="Helical" evidence="1">
    <location>
        <begin position="29"/>
        <end position="49"/>
    </location>
</feature>
<feature type="transmembrane region" description="Helical" evidence="1">
    <location>
        <begin position="63"/>
        <end position="83"/>
    </location>
</feature>
<feature type="transmembrane region" description="Helical" evidence="1">
    <location>
        <begin position="94"/>
        <end position="114"/>
    </location>
</feature>
<feature type="transmembrane region" description="Helical" evidence="1">
    <location>
        <begin position="117"/>
        <end position="137"/>
    </location>
</feature>
<feature type="transmembrane region" description="Helical" evidence="1">
    <location>
        <begin position="143"/>
        <end position="163"/>
    </location>
</feature>
<feature type="transmembrane region" description="Helical" evidence="1">
    <location>
        <begin position="243"/>
        <end position="263"/>
    </location>
</feature>
<proteinExistence type="inferred from homology"/>
<name>ECFT_LISIN</name>
<gene>
    <name evidence="1" type="primary">ecfT</name>
    <name type="ordered locus">lin2748</name>
</gene>
<comment type="function">
    <text evidence="1">Transmembrane (T) component of an energy-coupling factor (ECF) ABC-transporter complex. Unlike classic ABC transporters this ECF transporter provides the energy necessary to transport a number of different substrates.</text>
</comment>
<comment type="subunit">
    <text evidence="1">Forms a stable energy-coupling factor (ECF) transporter complex composed of 2 membrane-embedded substrate-binding proteins (S component), 2 ATP-binding proteins (A component) and 2 transmembrane proteins (T component). May be able to interact with more than 1 S component at a time (By similarity).</text>
</comment>
<comment type="subcellular location">
    <subcellularLocation>
        <location evidence="1">Cell membrane</location>
        <topology evidence="1">Multi-pass membrane protein</topology>
    </subcellularLocation>
</comment>
<comment type="similarity">
    <text evidence="1">Belongs to the energy-coupling factor EcfT family.</text>
</comment>
<dbReference type="EMBL" id="AL596173">
    <property type="protein sequence ID" value="CAC97974.1"/>
    <property type="molecule type" value="Genomic_DNA"/>
</dbReference>
<dbReference type="PIR" id="AF1775">
    <property type="entry name" value="AF1775"/>
</dbReference>
<dbReference type="RefSeq" id="WP_010991370.1">
    <property type="nucleotide sequence ID" value="NC_003212.1"/>
</dbReference>
<dbReference type="SMR" id="Q927P0"/>
<dbReference type="STRING" id="272626.gene:17567135"/>
<dbReference type="GeneID" id="93236021"/>
<dbReference type="KEGG" id="lin:lin2748"/>
<dbReference type="eggNOG" id="COG0619">
    <property type="taxonomic scope" value="Bacteria"/>
</dbReference>
<dbReference type="HOGENOM" id="CLU_056469_2_2_9"/>
<dbReference type="OrthoDB" id="8075495at2"/>
<dbReference type="Proteomes" id="UP000002513">
    <property type="component" value="Chromosome"/>
</dbReference>
<dbReference type="GO" id="GO:0005886">
    <property type="term" value="C:plasma membrane"/>
    <property type="evidence" value="ECO:0007669"/>
    <property type="project" value="UniProtKB-SubCell"/>
</dbReference>
<dbReference type="GO" id="GO:0022857">
    <property type="term" value="F:transmembrane transporter activity"/>
    <property type="evidence" value="ECO:0007669"/>
    <property type="project" value="UniProtKB-UniRule"/>
</dbReference>
<dbReference type="CDD" id="cd16914">
    <property type="entry name" value="EcfT"/>
    <property type="match status" value="1"/>
</dbReference>
<dbReference type="HAMAP" id="MF_01461">
    <property type="entry name" value="EcfT"/>
    <property type="match status" value="1"/>
</dbReference>
<dbReference type="InterPro" id="IPR003339">
    <property type="entry name" value="ABC/ECF_trnsptr_transmembrane"/>
</dbReference>
<dbReference type="InterPro" id="IPR024919">
    <property type="entry name" value="EcfT"/>
</dbReference>
<dbReference type="PANTHER" id="PTHR33514">
    <property type="entry name" value="PROTEIN ABCI12, CHLOROPLASTIC"/>
    <property type="match status" value="1"/>
</dbReference>
<dbReference type="PANTHER" id="PTHR33514:SF13">
    <property type="entry name" value="PROTEIN ABCI12, CHLOROPLASTIC"/>
    <property type="match status" value="1"/>
</dbReference>
<dbReference type="Pfam" id="PF02361">
    <property type="entry name" value="CbiQ"/>
    <property type="match status" value="1"/>
</dbReference>
<organism>
    <name type="scientific">Listeria innocua serovar 6a (strain ATCC BAA-680 / CLIP 11262)</name>
    <dbReference type="NCBI Taxonomy" id="272626"/>
    <lineage>
        <taxon>Bacteria</taxon>
        <taxon>Bacillati</taxon>
        <taxon>Bacillota</taxon>
        <taxon>Bacilli</taxon>
        <taxon>Bacillales</taxon>
        <taxon>Listeriaceae</taxon>
        <taxon>Listeria</taxon>
    </lineage>
</organism>
<sequence>MMEKMILGRYIPGNSWLHRIDPRAKITAVMAFIAIVFLANNWLTYALMFAYVLYLVLTSKVPFLFFIKGLQPIFWLILITLLLQVFFTKGGTVLVDLGLLQITTLGLANGAMMFCRFVLIIFMTTLLTLTTSPIELTDGLEKILAPFRLVHLPVHELALMLSISLRFIPTLMDETEKILKAQKARGVEFTSGKWSDRIKAIIPLLVPLFISAFKRAEDLAIAMEARGYRGGKGRTRFRLLRWRFADTCLLISLAVLSGLLFWLRS</sequence>
<accession>Q927P0</accession>
<keyword id="KW-1003">Cell membrane</keyword>
<keyword id="KW-0472">Membrane</keyword>
<keyword id="KW-0812">Transmembrane</keyword>
<keyword id="KW-1133">Transmembrane helix</keyword>
<keyword id="KW-0813">Transport</keyword>